<gene>
    <name evidence="1" type="primary">mug</name>
    <name type="ordered locus">SSON_3206</name>
</gene>
<proteinExistence type="inferred from homology"/>
<comment type="function">
    <text evidence="1">Excises ethenocytosine and uracil, which can arise by alkylation or deamination of cytosine, respectively, from the corresponding mispairs with guanine in ds-DNA. It is capable of hydrolyzing the carbon-nitrogen bond between the sugar-phosphate backbone of the DNA and the mispaired base. The complementary strand guanine functions in substrate recognition. Required for DNA damage lesion repair in stationary-phase cells.</text>
</comment>
<comment type="catalytic activity">
    <reaction evidence="1">
        <text>Specifically hydrolyzes mismatched double-stranded DNA and polynucleotides, releasing free uracil.</text>
        <dbReference type="EC" id="3.2.2.28"/>
    </reaction>
</comment>
<comment type="subunit">
    <text evidence="1">Binds DNA as a monomer.</text>
</comment>
<comment type="subcellular location">
    <subcellularLocation>
        <location evidence="1">Cytoplasm</location>
    </subcellularLocation>
</comment>
<comment type="similarity">
    <text evidence="1">Belongs to the uracil-DNA glycosylase (UDG) superfamily. TDG/mug family.</text>
</comment>
<dbReference type="EC" id="3.2.2.28" evidence="1"/>
<dbReference type="EMBL" id="CP000038">
    <property type="protein sequence ID" value="AAZ89788.1"/>
    <property type="molecule type" value="Genomic_DNA"/>
</dbReference>
<dbReference type="RefSeq" id="WP_000228937.1">
    <property type="nucleotide sequence ID" value="NC_007384.1"/>
</dbReference>
<dbReference type="SMR" id="Q3YXH4"/>
<dbReference type="GeneID" id="93778924"/>
<dbReference type="KEGG" id="ssn:SSON_3206"/>
<dbReference type="HOGENOM" id="CLU_042829_3_1_6"/>
<dbReference type="Proteomes" id="UP000002529">
    <property type="component" value="Chromosome"/>
</dbReference>
<dbReference type="GO" id="GO:0005737">
    <property type="term" value="C:cytoplasm"/>
    <property type="evidence" value="ECO:0007669"/>
    <property type="project" value="UniProtKB-SubCell"/>
</dbReference>
<dbReference type="GO" id="GO:0003677">
    <property type="term" value="F:DNA binding"/>
    <property type="evidence" value="ECO:0007669"/>
    <property type="project" value="UniProtKB-KW"/>
</dbReference>
<dbReference type="GO" id="GO:0008263">
    <property type="term" value="F:pyrimidine-specific mismatch base pair DNA N-glycosylase activity"/>
    <property type="evidence" value="ECO:0007669"/>
    <property type="project" value="UniProtKB-UniRule"/>
</dbReference>
<dbReference type="GO" id="GO:0004844">
    <property type="term" value="F:uracil DNA N-glycosylase activity"/>
    <property type="evidence" value="ECO:0007669"/>
    <property type="project" value="TreeGrafter"/>
</dbReference>
<dbReference type="GO" id="GO:0006285">
    <property type="term" value="P:base-excision repair, AP site formation"/>
    <property type="evidence" value="ECO:0007669"/>
    <property type="project" value="UniProtKB-UniRule"/>
</dbReference>
<dbReference type="CDD" id="cd10028">
    <property type="entry name" value="UDG-F2_TDG_MUG"/>
    <property type="match status" value="1"/>
</dbReference>
<dbReference type="FunFam" id="3.40.470.10:FF:000003">
    <property type="entry name" value="G/U mismatch-specific DNA glycosylase"/>
    <property type="match status" value="1"/>
</dbReference>
<dbReference type="Gene3D" id="3.40.470.10">
    <property type="entry name" value="Uracil-DNA glycosylase-like domain"/>
    <property type="match status" value="1"/>
</dbReference>
<dbReference type="HAMAP" id="MF_01956">
    <property type="entry name" value="MUG"/>
    <property type="match status" value="1"/>
</dbReference>
<dbReference type="InterPro" id="IPR015637">
    <property type="entry name" value="MUG/TDG"/>
</dbReference>
<dbReference type="InterPro" id="IPR023502">
    <property type="entry name" value="MUG_bact"/>
</dbReference>
<dbReference type="InterPro" id="IPR005122">
    <property type="entry name" value="Uracil-DNA_glycosylase-like"/>
</dbReference>
<dbReference type="InterPro" id="IPR036895">
    <property type="entry name" value="Uracil-DNA_glycosylase-like_sf"/>
</dbReference>
<dbReference type="NCBIfam" id="NF007570">
    <property type="entry name" value="PRK10201.1"/>
    <property type="match status" value="1"/>
</dbReference>
<dbReference type="PANTHER" id="PTHR12159">
    <property type="entry name" value="G/T AND G/U MISMATCH-SPECIFIC DNA GLYCOSYLASE"/>
    <property type="match status" value="1"/>
</dbReference>
<dbReference type="PANTHER" id="PTHR12159:SF9">
    <property type="entry name" value="G_T MISMATCH-SPECIFIC THYMINE DNA GLYCOSYLASE"/>
    <property type="match status" value="1"/>
</dbReference>
<dbReference type="Pfam" id="PF03167">
    <property type="entry name" value="UDG"/>
    <property type="match status" value="1"/>
</dbReference>
<dbReference type="SUPFAM" id="SSF52141">
    <property type="entry name" value="Uracil-DNA glycosylase-like"/>
    <property type="match status" value="1"/>
</dbReference>
<name>MUG_SHISS</name>
<keyword id="KW-0963">Cytoplasm</keyword>
<keyword id="KW-0227">DNA damage</keyword>
<keyword id="KW-0228">DNA excision</keyword>
<keyword id="KW-0234">DNA repair</keyword>
<keyword id="KW-0238">DNA-binding</keyword>
<keyword id="KW-0378">Hydrolase</keyword>
<keyword id="KW-1185">Reference proteome</keyword>
<feature type="chain" id="PRO_0000238687" description="G/U mismatch-specific DNA glycosylase">
    <location>
        <begin position="1"/>
        <end position="168"/>
    </location>
</feature>
<organism>
    <name type="scientific">Shigella sonnei (strain Ss046)</name>
    <dbReference type="NCBI Taxonomy" id="300269"/>
    <lineage>
        <taxon>Bacteria</taxon>
        <taxon>Pseudomonadati</taxon>
        <taxon>Pseudomonadota</taxon>
        <taxon>Gammaproteobacteria</taxon>
        <taxon>Enterobacterales</taxon>
        <taxon>Enterobacteriaceae</taxon>
        <taxon>Shigella</taxon>
    </lineage>
</organism>
<accession>Q3YXH4</accession>
<reference key="1">
    <citation type="journal article" date="2005" name="Nucleic Acids Res.">
        <title>Genome dynamics and diversity of Shigella species, the etiologic agents of bacillary dysentery.</title>
        <authorList>
            <person name="Yang F."/>
            <person name="Yang J."/>
            <person name="Zhang X."/>
            <person name="Chen L."/>
            <person name="Jiang Y."/>
            <person name="Yan Y."/>
            <person name="Tang X."/>
            <person name="Wang J."/>
            <person name="Xiong Z."/>
            <person name="Dong J."/>
            <person name="Xue Y."/>
            <person name="Zhu Y."/>
            <person name="Xu X."/>
            <person name="Sun L."/>
            <person name="Chen S."/>
            <person name="Nie H."/>
            <person name="Peng J."/>
            <person name="Xu J."/>
            <person name="Wang Y."/>
            <person name="Yuan Z."/>
            <person name="Wen Y."/>
            <person name="Yao Z."/>
            <person name="Shen Y."/>
            <person name="Qiang B."/>
            <person name="Hou Y."/>
            <person name="Yu J."/>
            <person name="Jin Q."/>
        </authorList>
    </citation>
    <scope>NUCLEOTIDE SEQUENCE [LARGE SCALE GENOMIC DNA]</scope>
    <source>
        <strain>Ss046</strain>
    </source>
</reference>
<evidence type="ECO:0000255" key="1">
    <source>
        <dbReference type="HAMAP-Rule" id="MF_01956"/>
    </source>
</evidence>
<protein>
    <recommendedName>
        <fullName evidence="1">G/U mismatch-specific DNA glycosylase</fullName>
        <ecNumber evidence="1">3.2.2.28</ecNumber>
    </recommendedName>
    <alternativeName>
        <fullName evidence="1">Double-strand-specific uracil glycosylase</fullName>
    </alternativeName>
    <alternativeName>
        <fullName evidence="1">Mismatch-specific uracil DNA-glycosylase</fullName>
        <shortName evidence="1">MUG</shortName>
    </alternativeName>
</protein>
<sequence length="168" mass="18673">MVEDILAPGLRVVFCGINPGLSSAGTGFPFAHPANRFWKVIYQAGFTDRQLKPQEAQHLLDYRCGVTKLVDRPTVQANEVSKQELHAGGRKLIEKIEDYQPQALAILGKQAYEQGFSQRGAQWGKQTLTIGSTQIWVLPNPSGLSRVSLEKLVEAYRELDQALVVRGR</sequence>